<accession>Q9SWF5</accession>
<organism>
    <name type="scientific">Solanum lycopersicum</name>
    <name type="common">Tomato</name>
    <name type="synonym">Lycopersicon esculentum</name>
    <dbReference type="NCBI Taxonomy" id="4081"/>
    <lineage>
        <taxon>Eukaryota</taxon>
        <taxon>Viridiplantae</taxon>
        <taxon>Streptophyta</taxon>
        <taxon>Embryophyta</taxon>
        <taxon>Tracheophyta</taxon>
        <taxon>Spermatophyta</taxon>
        <taxon>Magnoliopsida</taxon>
        <taxon>eudicotyledons</taxon>
        <taxon>Gunneridae</taxon>
        <taxon>Pentapetalae</taxon>
        <taxon>asterids</taxon>
        <taxon>lamiids</taxon>
        <taxon>Solanales</taxon>
        <taxon>Solanaceae</taxon>
        <taxon>Solanoideae</taxon>
        <taxon>Solaneae</taxon>
        <taxon>Solanum</taxon>
        <taxon>Solanum subgen. Lycopersicon</taxon>
    </lineage>
</organism>
<comment type="function">
    <text evidence="1">Adenosylhomocysteine is a competitive inhibitor of S-adenosyl-L-methionine-dependent methyl transferase reactions; therefore adenosylhomocysteinase may play a key role in the control of methylations via regulation of the intracellular concentration of adenosylhomocysteine.</text>
</comment>
<comment type="catalytic activity">
    <reaction>
        <text>S-adenosyl-L-homocysteine + H2O = L-homocysteine + adenosine</text>
        <dbReference type="Rhea" id="RHEA:21708"/>
        <dbReference type="ChEBI" id="CHEBI:15377"/>
        <dbReference type="ChEBI" id="CHEBI:16335"/>
        <dbReference type="ChEBI" id="CHEBI:57856"/>
        <dbReference type="ChEBI" id="CHEBI:58199"/>
        <dbReference type="EC" id="3.13.2.1"/>
    </reaction>
</comment>
<comment type="cofactor">
    <cofactor evidence="1">
        <name>NAD(+)</name>
        <dbReference type="ChEBI" id="CHEBI:57540"/>
    </cofactor>
    <text evidence="1">Binds 1 NAD(+) per subunit.</text>
</comment>
<comment type="pathway">
    <text>Amino-acid biosynthesis; L-homocysteine biosynthesis; L-homocysteine from S-adenosyl-L-homocysteine: step 1/1.</text>
</comment>
<comment type="similarity">
    <text evidence="2">Belongs to the adenosylhomocysteinase family.</text>
</comment>
<proteinExistence type="evidence at transcript level"/>
<evidence type="ECO:0000250" key="1"/>
<evidence type="ECO:0000305" key="2"/>
<sequence>MALLVEKTTSGREYKVKDMSQADFGRLEIELAEVEMPGLMASRAEFGPSQPVKGAKITCSLHMTIQTAFLIETLTALGAEVRWCSCNIFSTQDHAAAAIARDSAAVFAWKGETLQEYWWCTERALDWGPGGGPDLIVDDGGDATLLIHEGVKAEEEFAKNGTVPDPTSTDNVEFQLVLTIIKESLKTDPLRYTKMKERLVGVSEETTTGVKKLYQMPANGSLLFLPINVNDSVTKSKFDNLYGCRHSLPDGLMRATDVMIAGKVALVAGYGDVGKGCAAAMKQAGARVIVTEIDPICALQATMEGLQVLFLEDVVSEVDIFVTTTGNKDIIMVDHMRKMKNNAIVCNIGHFDNEIDMHGLETFPGVKRITIKPQTDRWVFPDTNSGIIVLAEGRLMNLGCATGHPSFVMSCSFTNQVIAQLELWNERSSGKYEKKVYVLPKHLDEKVAALHLGKFGAKLTKLTKDQADYIYVPVEGPYKPAHYRY</sequence>
<reference key="1">
    <citation type="submission" date="1999-06" db="EMBL/GenBank/DDBJ databases">
        <title>Differential expression of Lycopersicon esculentum genes in roots upon colonization by a VA mycorrhizal fungus.</title>
        <authorList>
            <person name="Rosewarne G.M."/>
            <person name="Smith S.E."/>
            <person name="Barker S.J."/>
        </authorList>
    </citation>
    <scope>NUCLEOTIDE SEQUENCE [MRNA]</scope>
    <source>
        <tissue>Root</tissue>
    </source>
</reference>
<protein>
    <recommendedName>
        <fullName>Adenosylhomocysteinase</fullName>
        <shortName>AdoHcyase</shortName>
        <ecNumber>3.13.2.1</ecNumber>
    </recommendedName>
    <alternativeName>
        <fullName>S-adenosyl-L-homocysteine hydrolase</fullName>
    </alternativeName>
</protein>
<keyword id="KW-0378">Hydrolase</keyword>
<keyword id="KW-0520">NAD</keyword>
<keyword id="KW-0554">One-carbon metabolism</keyword>
<keyword id="KW-1185">Reference proteome</keyword>
<name>SAHH_SOLLC</name>
<feature type="chain" id="PRO_0000116924" description="Adenosylhomocysteinase">
    <location>
        <begin position="1"/>
        <end position="485"/>
    </location>
</feature>
<feature type="binding site" evidence="1">
    <location>
        <position position="64"/>
    </location>
    <ligand>
        <name>substrate</name>
    </ligand>
</feature>
<feature type="binding site" evidence="1">
    <location>
        <position position="139"/>
    </location>
    <ligand>
        <name>substrate</name>
    </ligand>
</feature>
<feature type="binding site" evidence="1">
    <location>
        <position position="205"/>
    </location>
    <ligand>
        <name>substrate</name>
    </ligand>
</feature>
<feature type="binding site" evidence="1">
    <location>
        <begin position="206"/>
        <end position="208"/>
    </location>
    <ligand>
        <name>NAD(+)</name>
        <dbReference type="ChEBI" id="CHEBI:57540"/>
    </ligand>
</feature>
<feature type="binding site" evidence="1">
    <location>
        <position position="235"/>
    </location>
    <ligand>
        <name>substrate</name>
    </ligand>
</feature>
<feature type="binding site" evidence="1">
    <location>
        <position position="239"/>
    </location>
    <ligand>
        <name>substrate</name>
    </ligand>
</feature>
<feature type="binding site" evidence="1">
    <location>
        <position position="240"/>
    </location>
    <ligand>
        <name>NAD(+)</name>
        <dbReference type="ChEBI" id="CHEBI:57540"/>
    </ligand>
</feature>
<feature type="binding site" evidence="1">
    <location>
        <begin position="269"/>
        <end position="274"/>
    </location>
    <ligand>
        <name>NAD(+)</name>
        <dbReference type="ChEBI" id="CHEBI:57540"/>
    </ligand>
</feature>
<feature type="binding site" evidence="1">
    <location>
        <position position="292"/>
    </location>
    <ligand>
        <name>NAD(+)</name>
        <dbReference type="ChEBI" id="CHEBI:57540"/>
    </ligand>
</feature>
<feature type="binding site" evidence="1">
    <location>
        <position position="327"/>
    </location>
    <ligand>
        <name>NAD(+)</name>
        <dbReference type="ChEBI" id="CHEBI:57540"/>
    </ligand>
</feature>
<feature type="binding site" evidence="1">
    <location>
        <begin position="348"/>
        <end position="350"/>
    </location>
    <ligand>
        <name>NAD(+)</name>
        <dbReference type="ChEBI" id="CHEBI:57540"/>
    </ligand>
</feature>
<feature type="binding site" evidence="1">
    <location>
        <position position="397"/>
    </location>
    <ligand>
        <name>NAD(+)</name>
        <dbReference type="ChEBI" id="CHEBI:57540"/>
    </ligand>
</feature>
<gene>
    <name type="primary">SAHH</name>
</gene>
<dbReference type="EC" id="3.13.2.1"/>
<dbReference type="EMBL" id="AF161705">
    <property type="protein sequence ID" value="AAD50775.1"/>
    <property type="molecule type" value="mRNA"/>
</dbReference>
<dbReference type="SMR" id="Q9SWF5"/>
<dbReference type="FunCoup" id="Q9SWF5">
    <property type="interactions" value="2578"/>
</dbReference>
<dbReference type="STRING" id="4081.Q9SWF5"/>
<dbReference type="PaxDb" id="4081-Solyc09g092380.2.1"/>
<dbReference type="eggNOG" id="KOG1370">
    <property type="taxonomic scope" value="Eukaryota"/>
</dbReference>
<dbReference type="InParanoid" id="Q9SWF5"/>
<dbReference type="UniPathway" id="UPA00314">
    <property type="reaction ID" value="UER00076"/>
</dbReference>
<dbReference type="Proteomes" id="UP000004994">
    <property type="component" value="Unplaced"/>
</dbReference>
<dbReference type="ExpressionAtlas" id="Q9SWF5">
    <property type="expression patterns" value="baseline and differential"/>
</dbReference>
<dbReference type="GO" id="GO:0005829">
    <property type="term" value="C:cytosol"/>
    <property type="evidence" value="ECO:0000318"/>
    <property type="project" value="GO_Central"/>
</dbReference>
<dbReference type="GO" id="GO:0004013">
    <property type="term" value="F:adenosylhomocysteinase activity"/>
    <property type="evidence" value="ECO:0000318"/>
    <property type="project" value="GO_Central"/>
</dbReference>
<dbReference type="GO" id="GO:0006730">
    <property type="term" value="P:one-carbon metabolic process"/>
    <property type="evidence" value="ECO:0007669"/>
    <property type="project" value="UniProtKB-KW"/>
</dbReference>
<dbReference type="GO" id="GO:0033353">
    <property type="term" value="P:S-adenosylmethionine cycle"/>
    <property type="evidence" value="ECO:0000318"/>
    <property type="project" value="GO_Central"/>
</dbReference>
<dbReference type="CDD" id="cd00401">
    <property type="entry name" value="SAHH"/>
    <property type="match status" value="1"/>
</dbReference>
<dbReference type="FunFam" id="3.40.50.720:FF:000004">
    <property type="entry name" value="Adenosylhomocysteinase"/>
    <property type="match status" value="1"/>
</dbReference>
<dbReference type="Gene3D" id="3.40.50.1480">
    <property type="entry name" value="Adenosylhomocysteinase-like"/>
    <property type="match status" value="1"/>
</dbReference>
<dbReference type="Gene3D" id="3.40.50.720">
    <property type="entry name" value="NAD(P)-binding Rossmann-like Domain"/>
    <property type="match status" value="1"/>
</dbReference>
<dbReference type="HAMAP" id="MF_00563">
    <property type="entry name" value="AdoHcyase"/>
    <property type="match status" value="1"/>
</dbReference>
<dbReference type="InterPro" id="IPR042172">
    <property type="entry name" value="Adenosylhomocyst_ase-like_sf"/>
</dbReference>
<dbReference type="InterPro" id="IPR000043">
    <property type="entry name" value="Adenosylhomocysteinase-like"/>
</dbReference>
<dbReference type="InterPro" id="IPR015878">
    <property type="entry name" value="Ado_hCys_hydrolase_NAD-bd"/>
</dbReference>
<dbReference type="InterPro" id="IPR036291">
    <property type="entry name" value="NAD(P)-bd_dom_sf"/>
</dbReference>
<dbReference type="InterPro" id="IPR020082">
    <property type="entry name" value="S-Ado-L-homoCys_hydrolase_CS"/>
</dbReference>
<dbReference type="NCBIfam" id="TIGR00936">
    <property type="entry name" value="ahcY"/>
    <property type="match status" value="1"/>
</dbReference>
<dbReference type="NCBIfam" id="NF004005">
    <property type="entry name" value="PRK05476.2-3"/>
    <property type="match status" value="1"/>
</dbReference>
<dbReference type="PANTHER" id="PTHR23420">
    <property type="entry name" value="ADENOSYLHOMOCYSTEINASE"/>
    <property type="match status" value="1"/>
</dbReference>
<dbReference type="PANTHER" id="PTHR23420:SF0">
    <property type="entry name" value="ADENOSYLHOMOCYSTEINASE"/>
    <property type="match status" value="1"/>
</dbReference>
<dbReference type="Pfam" id="PF05221">
    <property type="entry name" value="AdoHcyase"/>
    <property type="match status" value="1"/>
</dbReference>
<dbReference type="Pfam" id="PF00670">
    <property type="entry name" value="AdoHcyase_NAD"/>
    <property type="match status" value="1"/>
</dbReference>
<dbReference type="PIRSF" id="PIRSF001109">
    <property type="entry name" value="Ad_hcy_hydrolase"/>
    <property type="match status" value="1"/>
</dbReference>
<dbReference type="SMART" id="SM00996">
    <property type="entry name" value="AdoHcyase"/>
    <property type="match status" value="1"/>
</dbReference>
<dbReference type="SMART" id="SM00997">
    <property type="entry name" value="AdoHcyase_NAD"/>
    <property type="match status" value="1"/>
</dbReference>
<dbReference type="SUPFAM" id="SSF52283">
    <property type="entry name" value="Formate/glycerate dehydrogenase catalytic domain-like"/>
    <property type="match status" value="2"/>
</dbReference>
<dbReference type="SUPFAM" id="SSF51735">
    <property type="entry name" value="NAD(P)-binding Rossmann-fold domains"/>
    <property type="match status" value="1"/>
</dbReference>
<dbReference type="PROSITE" id="PS00738">
    <property type="entry name" value="ADOHCYASE_1"/>
    <property type="match status" value="1"/>
</dbReference>
<dbReference type="PROSITE" id="PS00739">
    <property type="entry name" value="ADOHCYASE_2"/>
    <property type="match status" value="1"/>
</dbReference>